<accession>Q4ZWW0</accession>
<protein>
    <recommendedName>
        <fullName evidence="1">Lysine--tRNA ligase</fullName>
        <ecNumber evidence="1">6.1.1.6</ecNumber>
    </recommendedName>
    <alternativeName>
        <fullName evidence="1">Lysyl-tRNA synthetase</fullName>
        <shortName evidence="1">LysRS</shortName>
    </alternativeName>
</protein>
<dbReference type="EC" id="6.1.1.6" evidence="1"/>
<dbReference type="EMBL" id="CP000075">
    <property type="protein sequence ID" value="AAY36362.1"/>
    <property type="molecule type" value="Genomic_DNA"/>
</dbReference>
<dbReference type="RefSeq" id="WP_011266952.1">
    <property type="nucleotide sequence ID" value="NC_007005.1"/>
</dbReference>
<dbReference type="RefSeq" id="YP_234400.1">
    <property type="nucleotide sequence ID" value="NC_007005.1"/>
</dbReference>
<dbReference type="SMR" id="Q4ZWW0"/>
<dbReference type="STRING" id="205918.Psyr_1311"/>
<dbReference type="KEGG" id="psb:Psyr_1311"/>
<dbReference type="PATRIC" id="fig|205918.7.peg.1343"/>
<dbReference type="eggNOG" id="COG1190">
    <property type="taxonomic scope" value="Bacteria"/>
</dbReference>
<dbReference type="HOGENOM" id="CLU_008255_6_0_6"/>
<dbReference type="OrthoDB" id="9801152at2"/>
<dbReference type="Proteomes" id="UP000000426">
    <property type="component" value="Chromosome"/>
</dbReference>
<dbReference type="GO" id="GO:0005829">
    <property type="term" value="C:cytosol"/>
    <property type="evidence" value="ECO:0007669"/>
    <property type="project" value="TreeGrafter"/>
</dbReference>
<dbReference type="GO" id="GO:0005524">
    <property type="term" value="F:ATP binding"/>
    <property type="evidence" value="ECO:0007669"/>
    <property type="project" value="UniProtKB-UniRule"/>
</dbReference>
<dbReference type="GO" id="GO:0004824">
    <property type="term" value="F:lysine-tRNA ligase activity"/>
    <property type="evidence" value="ECO:0007669"/>
    <property type="project" value="UniProtKB-UniRule"/>
</dbReference>
<dbReference type="GO" id="GO:0000287">
    <property type="term" value="F:magnesium ion binding"/>
    <property type="evidence" value="ECO:0007669"/>
    <property type="project" value="UniProtKB-UniRule"/>
</dbReference>
<dbReference type="GO" id="GO:0000049">
    <property type="term" value="F:tRNA binding"/>
    <property type="evidence" value="ECO:0007669"/>
    <property type="project" value="TreeGrafter"/>
</dbReference>
<dbReference type="GO" id="GO:0006430">
    <property type="term" value="P:lysyl-tRNA aminoacylation"/>
    <property type="evidence" value="ECO:0007669"/>
    <property type="project" value="UniProtKB-UniRule"/>
</dbReference>
<dbReference type="CDD" id="cd00775">
    <property type="entry name" value="LysRS_core"/>
    <property type="match status" value="1"/>
</dbReference>
<dbReference type="CDD" id="cd04322">
    <property type="entry name" value="LysRS_N"/>
    <property type="match status" value="1"/>
</dbReference>
<dbReference type="FunFam" id="2.40.50.140:FF:000024">
    <property type="entry name" value="Lysine--tRNA ligase"/>
    <property type="match status" value="1"/>
</dbReference>
<dbReference type="FunFam" id="3.30.930.10:FF:000001">
    <property type="entry name" value="Lysine--tRNA ligase"/>
    <property type="match status" value="1"/>
</dbReference>
<dbReference type="Gene3D" id="3.30.930.10">
    <property type="entry name" value="Bira Bifunctional Protein, Domain 2"/>
    <property type="match status" value="1"/>
</dbReference>
<dbReference type="Gene3D" id="2.40.50.140">
    <property type="entry name" value="Nucleic acid-binding proteins"/>
    <property type="match status" value="1"/>
</dbReference>
<dbReference type="HAMAP" id="MF_00252">
    <property type="entry name" value="Lys_tRNA_synth_class2"/>
    <property type="match status" value="1"/>
</dbReference>
<dbReference type="InterPro" id="IPR004364">
    <property type="entry name" value="Aa-tRNA-synt_II"/>
</dbReference>
<dbReference type="InterPro" id="IPR006195">
    <property type="entry name" value="aa-tRNA-synth_II"/>
</dbReference>
<dbReference type="InterPro" id="IPR045864">
    <property type="entry name" value="aa-tRNA-synth_II/BPL/LPL"/>
</dbReference>
<dbReference type="InterPro" id="IPR002313">
    <property type="entry name" value="Lys-tRNA-ligase_II"/>
</dbReference>
<dbReference type="InterPro" id="IPR044136">
    <property type="entry name" value="Lys-tRNA-ligase_II_N"/>
</dbReference>
<dbReference type="InterPro" id="IPR018149">
    <property type="entry name" value="Lys-tRNA-synth_II_C"/>
</dbReference>
<dbReference type="InterPro" id="IPR012340">
    <property type="entry name" value="NA-bd_OB-fold"/>
</dbReference>
<dbReference type="InterPro" id="IPR004365">
    <property type="entry name" value="NA-bd_OB_tRNA"/>
</dbReference>
<dbReference type="NCBIfam" id="TIGR00499">
    <property type="entry name" value="lysS_bact"/>
    <property type="match status" value="1"/>
</dbReference>
<dbReference type="NCBIfam" id="NF001756">
    <property type="entry name" value="PRK00484.1"/>
    <property type="match status" value="1"/>
</dbReference>
<dbReference type="PANTHER" id="PTHR42918:SF15">
    <property type="entry name" value="LYSINE--TRNA LIGASE, CHLOROPLASTIC_MITOCHONDRIAL"/>
    <property type="match status" value="1"/>
</dbReference>
<dbReference type="PANTHER" id="PTHR42918">
    <property type="entry name" value="LYSYL-TRNA SYNTHETASE"/>
    <property type="match status" value="1"/>
</dbReference>
<dbReference type="Pfam" id="PF00152">
    <property type="entry name" value="tRNA-synt_2"/>
    <property type="match status" value="1"/>
</dbReference>
<dbReference type="Pfam" id="PF01336">
    <property type="entry name" value="tRNA_anti-codon"/>
    <property type="match status" value="1"/>
</dbReference>
<dbReference type="PRINTS" id="PR00982">
    <property type="entry name" value="TRNASYNTHLYS"/>
</dbReference>
<dbReference type="SUPFAM" id="SSF55681">
    <property type="entry name" value="Class II aaRS and biotin synthetases"/>
    <property type="match status" value="1"/>
</dbReference>
<dbReference type="SUPFAM" id="SSF50249">
    <property type="entry name" value="Nucleic acid-binding proteins"/>
    <property type="match status" value="1"/>
</dbReference>
<dbReference type="PROSITE" id="PS50862">
    <property type="entry name" value="AA_TRNA_LIGASE_II"/>
    <property type="match status" value="1"/>
</dbReference>
<comment type="catalytic activity">
    <reaction evidence="1">
        <text>tRNA(Lys) + L-lysine + ATP = L-lysyl-tRNA(Lys) + AMP + diphosphate</text>
        <dbReference type="Rhea" id="RHEA:20792"/>
        <dbReference type="Rhea" id="RHEA-COMP:9696"/>
        <dbReference type="Rhea" id="RHEA-COMP:9697"/>
        <dbReference type="ChEBI" id="CHEBI:30616"/>
        <dbReference type="ChEBI" id="CHEBI:32551"/>
        <dbReference type="ChEBI" id="CHEBI:33019"/>
        <dbReference type="ChEBI" id="CHEBI:78442"/>
        <dbReference type="ChEBI" id="CHEBI:78529"/>
        <dbReference type="ChEBI" id="CHEBI:456215"/>
        <dbReference type="EC" id="6.1.1.6"/>
    </reaction>
</comment>
<comment type="cofactor">
    <cofactor evidence="1">
        <name>Mg(2+)</name>
        <dbReference type="ChEBI" id="CHEBI:18420"/>
    </cofactor>
    <text evidence="1">Binds 3 Mg(2+) ions per subunit.</text>
</comment>
<comment type="subunit">
    <text evidence="1">Homodimer.</text>
</comment>
<comment type="subcellular location">
    <subcellularLocation>
        <location evidence="1">Cytoplasm</location>
    </subcellularLocation>
</comment>
<comment type="similarity">
    <text evidence="1">Belongs to the class-II aminoacyl-tRNA synthetase family.</text>
</comment>
<gene>
    <name evidence="1" type="primary">lysS</name>
    <name type="ordered locus">Psyr_1311</name>
</gene>
<proteinExistence type="inferred from homology"/>
<evidence type="ECO:0000255" key="1">
    <source>
        <dbReference type="HAMAP-Rule" id="MF_00252"/>
    </source>
</evidence>
<feature type="chain" id="PRO_1000012914" description="Lysine--tRNA ligase">
    <location>
        <begin position="1"/>
        <end position="500"/>
    </location>
</feature>
<feature type="binding site" evidence="1">
    <location>
        <position position="410"/>
    </location>
    <ligand>
        <name>Mg(2+)</name>
        <dbReference type="ChEBI" id="CHEBI:18420"/>
        <label>1</label>
    </ligand>
</feature>
<feature type="binding site" evidence="1">
    <location>
        <position position="417"/>
    </location>
    <ligand>
        <name>Mg(2+)</name>
        <dbReference type="ChEBI" id="CHEBI:18420"/>
        <label>1</label>
    </ligand>
</feature>
<feature type="binding site" evidence="1">
    <location>
        <position position="417"/>
    </location>
    <ligand>
        <name>Mg(2+)</name>
        <dbReference type="ChEBI" id="CHEBI:18420"/>
        <label>2</label>
    </ligand>
</feature>
<sequence>MSDQQLDPQALQQEENTLIALRKEKLAAGRAKGQAFPNDFRRDSYCNDLQKQYVDKTKEELAEAAIPVKVAGRIMLNRGSFMVIQDMTGRIQVYVNRKTLPEETLAEVKTWDLGDIIAAEGTLARSGKGDLYVEMTSVRLLTKSLRPLPDKHHGLTDTEQRYRQRYVDLIVNEEVRETFRVRSQVIAHIRSFLMKRDFLEVETPMLQTIPGGAAAKPFETHHNALDMEMFLRIAPELYLKRLVVGGFEKVFEINRNFRNEGVSTRHNPEFTMLEFYQAYADYEDNMDLTEELFRELAQLVLGSTDVPYGDKVFHFGEPFVRLSVFDSILKYNPELTVADLQDIDKARAIAKKAGAKVLGFEGLGKLQVMIFEELVEHKLEQPHFITQYPFEVSPLARRNDENPNVTDRFELFIGGREIANAYSELNDAEDQAERFQAQVADKDAGDDEAMHYDADFVRALEYGMPPTAGEGIGIDRLVMLLTDSPSIRDVILFPHMRPQA</sequence>
<reference key="1">
    <citation type="journal article" date="2005" name="Proc. Natl. Acad. Sci. U.S.A.">
        <title>Comparison of the complete genome sequences of Pseudomonas syringae pv. syringae B728a and pv. tomato DC3000.</title>
        <authorList>
            <person name="Feil H."/>
            <person name="Feil W.S."/>
            <person name="Chain P."/>
            <person name="Larimer F."/>
            <person name="Dibartolo G."/>
            <person name="Copeland A."/>
            <person name="Lykidis A."/>
            <person name="Trong S."/>
            <person name="Nolan M."/>
            <person name="Goltsman E."/>
            <person name="Thiel J."/>
            <person name="Malfatti S."/>
            <person name="Loper J.E."/>
            <person name="Lapidus A."/>
            <person name="Detter J.C."/>
            <person name="Land M."/>
            <person name="Richardson P.M."/>
            <person name="Kyrpides N.C."/>
            <person name="Ivanova N."/>
            <person name="Lindow S.E."/>
        </authorList>
    </citation>
    <scope>NUCLEOTIDE SEQUENCE [LARGE SCALE GENOMIC DNA]</scope>
    <source>
        <strain>B728a</strain>
    </source>
</reference>
<organism>
    <name type="scientific">Pseudomonas syringae pv. syringae (strain B728a)</name>
    <dbReference type="NCBI Taxonomy" id="205918"/>
    <lineage>
        <taxon>Bacteria</taxon>
        <taxon>Pseudomonadati</taxon>
        <taxon>Pseudomonadota</taxon>
        <taxon>Gammaproteobacteria</taxon>
        <taxon>Pseudomonadales</taxon>
        <taxon>Pseudomonadaceae</taxon>
        <taxon>Pseudomonas</taxon>
        <taxon>Pseudomonas syringae</taxon>
    </lineage>
</organism>
<keyword id="KW-0030">Aminoacyl-tRNA synthetase</keyword>
<keyword id="KW-0067">ATP-binding</keyword>
<keyword id="KW-0963">Cytoplasm</keyword>
<keyword id="KW-0436">Ligase</keyword>
<keyword id="KW-0460">Magnesium</keyword>
<keyword id="KW-0479">Metal-binding</keyword>
<keyword id="KW-0547">Nucleotide-binding</keyword>
<keyword id="KW-0648">Protein biosynthesis</keyword>
<name>SYK_PSEU2</name>